<organism>
    <name type="scientific">Stichodactyla helianthus</name>
    <name type="common">Sun anemone</name>
    <name type="synonym">Stoichactis helianthus</name>
    <dbReference type="NCBI Taxonomy" id="6123"/>
    <lineage>
        <taxon>Eukaryota</taxon>
        <taxon>Metazoa</taxon>
        <taxon>Cnidaria</taxon>
        <taxon>Anthozoa</taxon>
        <taxon>Hexacorallia</taxon>
        <taxon>Actiniaria</taxon>
        <taxon>Stichodactylidae</taxon>
        <taxon>Stichodactyla</taxon>
    </lineage>
</organism>
<evidence type="ECO:0000250" key="1">
    <source>
        <dbReference type="UniProtKB" id="P31713"/>
    </source>
</evidence>
<evidence type="ECO:0000255" key="2">
    <source>
        <dbReference type="PROSITE-ProRule" id="PRU00031"/>
    </source>
</evidence>
<evidence type="ECO:0000269" key="3">
    <source>
    </source>
</evidence>
<evidence type="ECO:0000269" key="4">
    <source ref="1"/>
</evidence>
<evidence type="ECO:0000303" key="5">
    <source>
    </source>
</evidence>
<evidence type="ECO:0000303" key="6">
    <source ref="1"/>
</evidence>
<evidence type="ECO:0000305" key="7"/>
<evidence type="ECO:0000305" key="8">
    <source ref="1"/>
</evidence>
<accession>P81129</accession>
<feature type="chain" id="PRO_0000155420" description="PI-stichotoxin-She2b" evidence="4">
    <location>
        <begin position="1"/>
        <end position="55"/>
    </location>
</feature>
<feature type="domain" description="BPTI/Kunitz inhibitor" evidence="2">
    <location>
        <begin position="3"/>
        <end position="53"/>
    </location>
</feature>
<feature type="site" description="Reactive bond for trypsin" evidence="1">
    <location>
        <begin position="13"/>
        <end position="14"/>
    </location>
</feature>
<feature type="disulfide bond" evidence="2">
    <location>
        <begin position="3"/>
        <end position="53"/>
    </location>
</feature>
<feature type="disulfide bond" evidence="2">
    <location>
        <begin position="12"/>
        <end position="36"/>
    </location>
</feature>
<feature type="disulfide bond" evidence="2">
    <location>
        <begin position="28"/>
        <end position="49"/>
    </location>
</feature>
<dbReference type="SMR" id="P81129"/>
<dbReference type="MEROPS" id="I02.061"/>
<dbReference type="GO" id="GO:0005615">
    <property type="term" value="C:extracellular space"/>
    <property type="evidence" value="ECO:0007669"/>
    <property type="project" value="TreeGrafter"/>
</dbReference>
<dbReference type="GO" id="GO:0042151">
    <property type="term" value="C:nematocyst"/>
    <property type="evidence" value="ECO:0007669"/>
    <property type="project" value="UniProtKB-SubCell"/>
</dbReference>
<dbReference type="GO" id="GO:0019828">
    <property type="term" value="F:aspartic-type endopeptidase inhibitor activity"/>
    <property type="evidence" value="ECO:0007669"/>
    <property type="project" value="UniProtKB-KW"/>
</dbReference>
<dbReference type="GO" id="GO:0004867">
    <property type="term" value="F:serine-type endopeptidase inhibitor activity"/>
    <property type="evidence" value="ECO:0007669"/>
    <property type="project" value="UniProtKB-KW"/>
</dbReference>
<dbReference type="FunFam" id="4.10.410.10:FF:000021">
    <property type="entry name" value="Serine protease inhibitor, putative"/>
    <property type="match status" value="1"/>
</dbReference>
<dbReference type="Gene3D" id="4.10.410.10">
    <property type="entry name" value="Pancreatic trypsin inhibitor Kunitz domain"/>
    <property type="match status" value="1"/>
</dbReference>
<dbReference type="InterPro" id="IPR002223">
    <property type="entry name" value="Kunitz_BPTI"/>
</dbReference>
<dbReference type="InterPro" id="IPR036880">
    <property type="entry name" value="Kunitz_BPTI_sf"/>
</dbReference>
<dbReference type="InterPro" id="IPR020901">
    <property type="entry name" value="Prtase_inh_Kunz-CS"/>
</dbReference>
<dbReference type="InterPro" id="IPR050098">
    <property type="entry name" value="TFPI/VKTCI-like"/>
</dbReference>
<dbReference type="PANTHER" id="PTHR10083:SF374">
    <property type="entry name" value="BPTI_KUNITZ INHIBITOR DOMAIN-CONTAINING PROTEIN"/>
    <property type="match status" value="1"/>
</dbReference>
<dbReference type="PANTHER" id="PTHR10083">
    <property type="entry name" value="KUNITZ-TYPE PROTEASE INHIBITOR-RELATED"/>
    <property type="match status" value="1"/>
</dbReference>
<dbReference type="Pfam" id="PF00014">
    <property type="entry name" value="Kunitz_BPTI"/>
    <property type="match status" value="1"/>
</dbReference>
<dbReference type="PRINTS" id="PR00759">
    <property type="entry name" value="BASICPTASE"/>
</dbReference>
<dbReference type="SMART" id="SM00131">
    <property type="entry name" value="KU"/>
    <property type="match status" value="1"/>
</dbReference>
<dbReference type="SUPFAM" id="SSF57362">
    <property type="entry name" value="BPTI-like"/>
    <property type="match status" value="1"/>
</dbReference>
<dbReference type="PROSITE" id="PS00280">
    <property type="entry name" value="BPTI_KUNITZ_1"/>
    <property type="match status" value="1"/>
</dbReference>
<dbReference type="PROSITE" id="PS50279">
    <property type="entry name" value="BPTI_KUNITZ_2"/>
    <property type="match status" value="1"/>
</dbReference>
<sequence>SFCLEPKRVGRCKGYFPRFYFDSKTGKCTPFIYGGCGGNGNNFETLHQCRAICRA</sequence>
<reference key="1">
    <citation type="journal article" date="1998" name="Toxicon">
        <title>Purification and partial characterization of a novel proteinase inhibitor from the sea anemone Stichodactyla helianthus.</title>
        <authorList>
            <person name="Diaz J."/>
            <person name="Morera V."/>
            <person name="Delfin J."/>
            <person name="Huerta V."/>
            <person name="Lima G."/>
            <person name="Rodriguex de la Vega M."/>
            <person name="Garcia B."/>
            <person name="Padron G."/>
            <person name="Assfalg-Machleidt I."/>
            <person name="Machleidt W."/>
            <person name="Chavez M."/>
        </authorList>
    </citation>
    <scope>PROTEIN SEQUENCE</scope>
    <scope>FUNCTION</scope>
</reference>
<reference key="2">
    <citation type="journal article" date="2012" name="Peptides">
        <title>Peptide fingerprinting of the neurotoxic fractions isolated from the secretions of sea anemones Stichodactyla helianthus and Bunodosoma granulifera. New members of the APETx-like family identified by a 454 pyrosequencing approach.</title>
        <authorList>
            <person name="Rodriguez A.A."/>
            <person name="Cassoli J.S."/>
            <person name="Sa F."/>
            <person name="Dong Z.Q."/>
            <person name="de Freitas J.C."/>
            <person name="Pimenta A.M."/>
            <person name="de Lima M.E."/>
            <person name="Konno K."/>
            <person name="Lee S.M."/>
            <person name="Garateix A."/>
            <person name="Zaharenko A.J."/>
        </authorList>
    </citation>
    <scope>MASS SPECTROMETRY</scope>
</reference>
<reference key="3">
    <citation type="journal article" date="2012" name="Toxicon">
        <title>Development of a rational nomenclature for naming peptide and protein toxins from sea anemones.</title>
        <authorList>
            <person name="Oliveira J.S."/>
            <person name="Fuentes-Silva D."/>
            <person name="King G.F."/>
        </authorList>
    </citation>
    <scope>NOMENCLATURE</scope>
</reference>
<name>VKT2_STIHL</name>
<proteinExistence type="evidence at protein level"/>
<protein>
    <recommendedName>
        <fullName evidence="5">PI-stichotoxin-She2b</fullName>
        <shortName evidence="5">PI-SHTX-She2b</shortName>
    </recommendedName>
    <alternativeName>
        <fullName evidence="6">Kunitz-type protease inhibitor SHPI-2</fullName>
    </alternativeName>
</protein>
<comment type="function">
    <text evidence="4">Inhibitor of serine, cysteine, and aspartic proteinases.</text>
</comment>
<comment type="subcellular location">
    <subcellularLocation>
        <location evidence="8">Secreted</location>
    </subcellularLocation>
    <subcellularLocation>
        <location evidence="7">Nematocyst</location>
    </subcellularLocation>
</comment>
<comment type="mass spectrometry"/>
<comment type="miscellaneous">
    <text evidence="3">Does not show effect on crabs.</text>
</comment>
<comment type="similarity">
    <text evidence="7">Belongs to the venom Kunitz-type family. Sea anemone type 2 potassium channel toxin subfamily.</text>
</comment>
<keyword id="KW-0062">Aspartic protease inhibitor</keyword>
<keyword id="KW-0903">Direct protein sequencing</keyword>
<keyword id="KW-1015">Disulfide bond</keyword>
<keyword id="KW-0166">Nematocyst</keyword>
<keyword id="KW-0646">Protease inhibitor</keyword>
<keyword id="KW-0964">Secreted</keyword>
<keyword id="KW-0722">Serine protease inhibitor</keyword>